<feature type="chain" id="PRO_1000146019" description="tRNA N6-adenosine threonylcarbamoyltransferase">
    <location>
        <begin position="1"/>
        <end position="337"/>
    </location>
</feature>
<feature type="binding site" evidence="1">
    <location>
        <position position="111"/>
    </location>
    <ligand>
        <name>Fe cation</name>
        <dbReference type="ChEBI" id="CHEBI:24875"/>
    </ligand>
</feature>
<feature type="binding site" evidence="1">
    <location>
        <position position="115"/>
    </location>
    <ligand>
        <name>Fe cation</name>
        <dbReference type="ChEBI" id="CHEBI:24875"/>
    </ligand>
</feature>
<feature type="binding site" evidence="1">
    <location>
        <begin position="134"/>
        <end position="138"/>
    </location>
    <ligand>
        <name>substrate</name>
    </ligand>
</feature>
<feature type="binding site" evidence="1">
    <location>
        <position position="167"/>
    </location>
    <ligand>
        <name>substrate</name>
    </ligand>
</feature>
<feature type="binding site" evidence="1">
    <location>
        <position position="180"/>
    </location>
    <ligand>
        <name>substrate</name>
    </ligand>
</feature>
<feature type="binding site" evidence="1">
    <location>
        <position position="272"/>
    </location>
    <ligand>
        <name>substrate</name>
    </ligand>
</feature>
<feature type="binding site" evidence="1">
    <location>
        <position position="300"/>
    </location>
    <ligand>
        <name>Fe cation</name>
        <dbReference type="ChEBI" id="CHEBI:24875"/>
    </ligand>
</feature>
<organism>
    <name type="scientific">Salmonella newport (strain SL254)</name>
    <dbReference type="NCBI Taxonomy" id="423368"/>
    <lineage>
        <taxon>Bacteria</taxon>
        <taxon>Pseudomonadati</taxon>
        <taxon>Pseudomonadota</taxon>
        <taxon>Gammaproteobacteria</taxon>
        <taxon>Enterobacterales</taxon>
        <taxon>Enterobacteriaceae</taxon>
        <taxon>Salmonella</taxon>
    </lineage>
</organism>
<dbReference type="EC" id="2.3.1.234" evidence="1"/>
<dbReference type="EMBL" id="CP001113">
    <property type="protein sequence ID" value="ACF64328.1"/>
    <property type="molecule type" value="Genomic_DNA"/>
</dbReference>
<dbReference type="RefSeq" id="WP_001264391.1">
    <property type="nucleotide sequence ID" value="NZ_CCMR01000001.1"/>
</dbReference>
<dbReference type="SMR" id="B4T678"/>
<dbReference type="KEGG" id="see:SNSL254_A3468"/>
<dbReference type="HOGENOM" id="CLU_023208_0_0_6"/>
<dbReference type="Proteomes" id="UP000008824">
    <property type="component" value="Chromosome"/>
</dbReference>
<dbReference type="GO" id="GO:0005737">
    <property type="term" value="C:cytoplasm"/>
    <property type="evidence" value="ECO:0007669"/>
    <property type="project" value="UniProtKB-SubCell"/>
</dbReference>
<dbReference type="GO" id="GO:0005506">
    <property type="term" value="F:iron ion binding"/>
    <property type="evidence" value="ECO:0007669"/>
    <property type="project" value="UniProtKB-UniRule"/>
</dbReference>
<dbReference type="GO" id="GO:0061711">
    <property type="term" value="F:N(6)-L-threonylcarbamoyladenine synthase activity"/>
    <property type="evidence" value="ECO:0007669"/>
    <property type="project" value="UniProtKB-EC"/>
</dbReference>
<dbReference type="GO" id="GO:0002949">
    <property type="term" value="P:tRNA threonylcarbamoyladenosine modification"/>
    <property type="evidence" value="ECO:0007669"/>
    <property type="project" value="UniProtKB-UniRule"/>
</dbReference>
<dbReference type="CDD" id="cd24097">
    <property type="entry name" value="ASKHA_NBD_TsaD-like"/>
    <property type="match status" value="1"/>
</dbReference>
<dbReference type="FunFam" id="3.30.420.40:FF:000031">
    <property type="entry name" value="tRNA N6-adenosine threonylcarbamoyltransferase"/>
    <property type="match status" value="1"/>
</dbReference>
<dbReference type="Gene3D" id="3.30.420.40">
    <property type="match status" value="2"/>
</dbReference>
<dbReference type="HAMAP" id="MF_01445">
    <property type="entry name" value="TsaD"/>
    <property type="match status" value="1"/>
</dbReference>
<dbReference type="InterPro" id="IPR043129">
    <property type="entry name" value="ATPase_NBD"/>
</dbReference>
<dbReference type="InterPro" id="IPR000905">
    <property type="entry name" value="Gcp-like_dom"/>
</dbReference>
<dbReference type="InterPro" id="IPR017861">
    <property type="entry name" value="KAE1/TsaD"/>
</dbReference>
<dbReference type="InterPro" id="IPR017860">
    <property type="entry name" value="Peptidase_M22_CS"/>
</dbReference>
<dbReference type="InterPro" id="IPR022450">
    <property type="entry name" value="TsaD"/>
</dbReference>
<dbReference type="NCBIfam" id="TIGR00329">
    <property type="entry name" value="gcp_kae1"/>
    <property type="match status" value="1"/>
</dbReference>
<dbReference type="NCBIfam" id="TIGR03723">
    <property type="entry name" value="T6A_TsaD_YgjD"/>
    <property type="match status" value="1"/>
</dbReference>
<dbReference type="PANTHER" id="PTHR11735">
    <property type="entry name" value="TRNA N6-ADENOSINE THREONYLCARBAMOYLTRANSFERASE"/>
    <property type="match status" value="1"/>
</dbReference>
<dbReference type="PANTHER" id="PTHR11735:SF6">
    <property type="entry name" value="TRNA N6-ADENOSINE THREONYLCARBAMOYLTRANSFERASE, MITOCHONDRIAL"/>
    <property type="match status" value="1"/>
</dbReference>
<dbReference type="Pfam" id="PF00814">
    <property type="entry name" value="TsaD"/>
    <property type="match status" value="1"/>
</dbReference>
<dbReference type="PRINTS" id="PR00789">
    <property type="entry name" value="OSIALOPTASE"/>
</dbReference>
<dbReference type="SUPFAM" id="SSF53067">
    <property type="entry name" value="Actin-like ATPase domain"/>
    <property type="match status" value="1"/>
</dbReference>
<dbReference type="PROSITE" id="PS01016">
    <property type="entry name" value="GLYCOPROTEASE"/>
    <property type="match status" value="1"/>
</dbReference>
<accession>B4T678</accession>
<proteinExistence type="inferred from homology"/>
<evidence type="ECO:0000255" key="1">
    <source>
        <dbReference type="HAMAP-Rule" id="MF_01445"/>
    </source>
</evidence>
<protein>
    <recommendedName>
        <fullName evidence="1">tRNA N6-adenosine threonylcarbamoyltransferase</fullName>
        <ecNumber evidence="1">2.3.1.234</ecNumber>
    </recommendedName>
    <alternativeName>
        <fullName evidence="1">N6-L-threonylcarbamoyladenine synthase</fullName>
        <shortName evidence="1">t(6)A synthase</shortName>
    </alternativeName>
    <alternativeName>
        <fullName evidence="1">t(6)A37 threonylcarbamoyladenosine biosynthesis protein TsaD</fullName>
    </alternativeName>
    <alternativeName>
        <fullName evidence="1">tRNA threonylcarbamoyladenosine biosynthesis protein TsaD</fullName>
    </alternativeName>
</protein>
<name>TSAD_SALNS</name>
<reference key="1">
    <citation type="journal article" date="2011" name="J. Bacteriol.">
        <title>Comparative genomics of 28 Salmonella enterica isolates: evidence for CRISPR-mediated adaptive sublineage evolution.</title>
        <authorList>
            <person name="Fricke W.F."/>
            <person name="Mammel M.K."/>
            <person name="McDermott P.F."/>
            <person name="Tartera C."/>
            <person name="White D.G."/>
            <person name="Leclerc J.E."/>
            <person name="Ravel J."/>
            <person name="Cebula T.A."/>
        </authorList>
    </citation>
    <scope>NUCLEOTIDE SEQUENCE [LARGE SCALE GENOMIC DNA]</scope>
    <source>
        <strain>SL254</strain>
    </source>
</reference>
<gene>
    <name evidence="1" type="primary">tsaD</name>
    <name type="synonym">gcp</name>
    <name type="ordered locus">SNSL254_A3468</name>
</gene>
<keyword id="KW-0012">Acyltransferase</keyword>
<keyword id="KW-0963">Cytoplasm</keyword>
<keyword id="KW-0408">Iron</keyword>
<keyword id="KW-0479">Metal-binding</keyword>
<keyword id="KW-0808">Transferase</keyword>
<keyword id="KW-0819">tRNA processing</keyword>
<comment type="function">
    <text evidence="1">Required for the formation of a threonylcarbamoyl group on adenosine at position 37 (t(6)A37) in tRNAs that read codons beginning with adenine. Is involved in the transfer of the threonylcarbamoyl moiety of threonylcarbamoyl-AMP (TC-AMP) to the N6 group of A37, together with TsaE and TsaB. TsaD likely plays a direct catalytic role in this reaction.</text>
</comment>
<comment type="catalytic activity">
    <reaction evidence="1">
        <text>L-threonylcarbamoyladenylate + adenosine(37) in tRNA = N(6)-L-threonylcarbamoyladenosine(37) in tRNA + AMP + H(+)</text>
        <dbReference type="Rhea" id="RHEA:37059"/>
        <dbReference type="Rhea" id="RHEA-COMP:10162"/>
        <dbReference type="Rhea" id="RHEA-COMP:10163"/>
        <dbReference type="ChEBI" id="CHEBI:15378"/>
        <dbReference type="ChEBI" id="CHEBI:73682"/>
        <dbReference type="ChEBI" id="CHEBI:74411"/>
        <dbReference type="ChEBI" id="CHEBI:74418"/>
        <dbReference type="ChEBI" id="CHEBI:456215"/>
        <dbReference type="EC" id="2.3.1.234"/>
    </reaction>
</comment>
<comment type="cofactor">
    <cofactor evidence="1">
        <name>Fe(2+)</name>
        <dbReference type="ChEBI" id="CHEBI:29033"/>
    </cofactor>
    <text evidence="1">Binds 1 Fe(2+) ion per subunit.</text>
</comment>
<comment type="subcellular location">
    <subcellularLocation>
        <location evidence="1">Cytoplasm</location>
    </subcellularLocation>
</comment>
<comment type="similarity">
    <text evidence="1">Belongs to the KAE1 / TsaD family.</text>
</comment>
<sequence>MRVLGIETSCDETGIAIYDDKKGLLANQLYSQVKLHADYGGVVPELASRDHVRKTVPLIQAALKEAGLTASDIDAVAYTAGPGLVGALLVGATVGRSLAFAWNVPAIPVHHMEGHLLAPMLEDNPPEFPFVALLVSGGHTQLISVTGIGQYELLGESIDDAAGEAFDKTAKLLGLDYPGGPMLSKMASQGTAGRFVFPRPMTDRPGLDFSFSGLKTFAANTIRSNGDDEQTRADIARAFEDAVVDTLMIKCKRALESTGFKRLVMAGGVSANRTLRAKLAEMMQKRRGEVFYARPEFCTDNGAMIAYAGMVRFKAGVTADLGVTVRPRWPLAELPAA</sequence>